<dbReference type="EMBL" id="AC003981">
    <property type="protein sequence ID" value="AAF99781.1"/>
    <property type="molecule type" value="Genomic_DNA"/>
</dbReference>
<dbReference type="EMBL" id="CP002684">
    <property type="protein sequence ID" value="AEE28317.1"/>
    <property type="molecule type" value="Genomic_DNA"/>
</dbReference>
<dbReference type="PIR" id="T00714">
    <property type="entry name" value="T00714"/>
</dbReference>
<dbReference type="RefSeq" id="NP_172337.1">
    <property type="nucleotide sequence ID" value="NM_100734.3"/>
</dbReference>
<dbReference type="SMR" id="Q9FRS4"/>
<dbReference type="FunCoup" id="Q9FRS4">
    <property type="interactions" value="95"/>
</dbReference>
<dbReference type="PaxDb" id="3702-AT1G08610.1"/>
<dbReference type="ProteomicsDB" id="234834"/>
<dbReference type="EnsemblPlants" id="AT1G08610.1">
    <property type="protein sequence ID" value="AT1G08610.1"/>
    <property type="gene ID" value="AT1G08610"/>
</dbReference>
<dbReference type="GeneID" id="837383"/>
<dbReference type="Gramene" id="AT1G08610.1">
    <property type="protein sequence ID" value="AT1G08610.1"/>
    <property type="gene ID" value="AT1G08610"/>
</dbReference>
<dbReference type="KEGG" id="ath:AT1G08610"/>
<dbReference type="Araport" id="AT1G08610"/>
<dbReference type="TAIR" id="AT1G08610"/>
<dbReference type="eggNOG" id="KOG4197">
    <property type="taxonomic scope" value="Eukaryota"/>
</dbReference>
<dbReference type="HOGENOM" id="CLU_002706_49_0_1"/>
<dbReference type="InParanoid" id="Q9FRS4"/>
<dbReference type="OMA" id="MISQNCS"/>
<dbReference type="OrthoDB" id="185373at2759"/>
<dbReference type="PhylomeDB" id="Q9FRS4"/>
<dbReference type="PRO" id="PR:Q9FRS4"/>
<dbReference type="Proteomes" id="UP000006548">
    <property type="component" value="Chromosome 1"/>
</dbReference>
<dbReference type="ExpressionAtlas" id="Q9FRS4">
    <property type="expression patterns" value="baseline and differential"/>
</dbReference>
<dbReference type="Gene3D" id="1.25.40.10">
    <property type="entry name" value="Tetratricopeptide repeat domain"/>
    <property type="match status" value="5"/>
</dbReference>
<dbReference type="InterPro" id="IPR002885">
    <property type="entry name" value="Pentatricopeptide_rpt"/>
</dbReference>
<dbReference type="InterPro" id="IPR011990">
    <property type="entry name" value="TPR-like_helical_dom_sf"/>
</dbReference>
<dbReference type="NCBIfam" id="TIGR00756">
    <property type="entry name" value="PPR"/>
    <property type="match status" value="8"/>
</dbReference>
<dbReference type="PANTHER" id="PTHR47447">
    <property type="entry name" value="OS03G0856100 PROTEIN"/>
    <property type="match status" value="1"/>
</dbReference>
<dbReference type="PANTHER" id="PTHR47447:SF22">
    <property type="entry name" value="TETRATRICOPEPTIDE-LIKE HELICAL DOMAIN SUPERFAMILY"/>
    <property type="match status" value="1"/>
</dbReference>
<dbReference type="Pfam" id="PF01535">
    <property type="entry name" value="PPR"/>
    <property type="match status" value="1"/>
</dbReference>
<dbReference type="Pfam" id="PF12854">
    <property type="entry name" value="PPR_1"/>
    <property type="match status" value="2"/>
</dbReference>
<dbReference type="Pfam" id="PF13041">
    <property type="entry name" value="PPR_2"/>
    <property type="match status" value="4"/>
</dbReference>
<dbReference type="PROSITE" id="PS51375">
    <property type="entry name" value="PPR"/>
    <property type="match status" value="13"/>
</dbReference>
<evidence type="ECO:0000305" key="1"/>
<comment type="similarity">
    <text evidence="1">Belongs to the PPR family. P subfamily.</text>
</comment>
<comment type="online information" name="Pentatricopeptide repeat proteins">
    <link uri="https://ppr.plantenergy.uwa.edu.au"/>
</comment>
<sequence>MASSNLLLEVQFLHIPSLSQKQANPLSCRKFSSLDWKQEIGLKKDVFFRCHGLLSSVCIDNVNDHAERSSEFHHYGVGTNLRARVKPMKQFGLSSDGPITENDEETNNEILHNLCSNGKLTDACKLVEVMARHNQVPHFPSCSNLVRGLARIDQLDKAMCILRVMVMSGGVPDTITYNMIIGNLCKKGHIRTALVLLEDMSLSGSPPDVITYNTVIRCMFDYGNAEQAIRFWKDQLQNGCPPFMITYTVLVELVCRYCGSARAIEVLEDMAVEGCYPDIVTYNSLVNYNCRRGNLEEVASVIQHILSHGLELNTVTYNTLLHSLCSHEYWDEVEEILNIMYQTSYCPTVITYNILINGLCKARLLSRAIDFFYQMLEQKCLPDIVTYNTVLGAMSKEGMVDDAIELLGLLKNTCCPPGLITYNSVIDGLAKKGLMKKALELYHQMLDAGIFPDDITRRSLIYGFCRANLVEEAGQVLKETSNRGNGIRGSTYRLVIQGLCKKKEIEMAIEVVEIMLTGGCKPDETIYTAIVKGVEEMGMGSEAVQLQKKLKQWKLLKEV</sequence>
<keyword id="KW-1185">Reference proteome</keyword>
<keyword id="KW-0677">Repeat</keyword>
<name>PPR22_ARATH</name>
<accession>Q9FRS4</accession>
<organism>
    <name type="scientific">Arabidopsis thaliana</name>
    <name type="common">Mouse-ear cress</name>
    <dbReference type="NCBI Taxonomy" id="3702"/>
    <lineage>
        <taxon>Eukaryota</taxon>
        <taxon>Viridiplantae</taxon>
        <taxon>Streptophyta</taxon>
        <taxon>Embryophyta</taxon>
        <taxon>Tracheophyta</taxon>
        <taxon>Spermatophyta</taxon>
        <taxon>Magnoliopsida</taxon>
        <taxon>eudicotyledons</taxon>
        <taxon>Gunneridae</taxon>
        <taxon>Pentapetalae</taxon>
        <taxon>rosids</taxon>
        <taxon>malvids</taxon>
        <taxon>Brassicales</taxon>
        <taxon>Brassicaceae</taxon>
        <taxon>Camelineae</taxon>
        <taxon>Arabidopsis</taxon>
    </lineage>
</organism>
<reference key="1">
    <citation type="journal article" date="2000" name="Nature">
        <title>Sequence and analysis of chromosome 1 of the plant Arabidopsis thaliana.</title>
        <authorList>
            <person name="Theologis A."/>
            <person name="Ecker J.R."/>
            <person name="Palm C.J."/>
            <person name="Federspiel N.A."/>
            <person name="Kaul S."/>
            <person name="White O."/>
            <person name="Alonso J."/>
            <person name="Altafi H."/>
            <person name="Araujo R."/>
            <person name="Bowman C.L."/>
            <person name="Brooks S.Y."/>
            <person name="Buehler E."/>
            <person name="Chan A."/>
            <person name="Chao Q."/>
            <person name="Chen H."/>
            <person name="Cheuk R.F."/>
            <person name="Chin C.W."/>
            <person name="Chung M.K."/>
            <person name="Conn L."/>
            <person name="Conway A.B."/>
            <person name="Conway A.R."/>
            <person name="Creasy T.H."/>
            <person name="Dewar K."/>
            <person name="Dunn P."/>
            <person name="Etgu P."/>
            <person name="Feldblyum T.V."/>
            <person name="Feng J.-D."/>
            <person name="Fong B."/>
            <person name="Fujii C.Y."/>
            <person name="Gill J.E."/>
            <person name="Goldsmith A.D."/>
            <person name="Haas B."/>
            <person name="Hansen N.F."/>
            <person name="Hughes B."/>
            <person name="Huizar L."/>
            <person name="Hunter J.L."/>
            <person name="Jenkins J."/>
            <person name="Johnson-Hopson C."/>
            <person name="Khan S."/>
            <person name="Khaykin E."/>
            <person name="Kim C.J."/>
            <person name="Koo H.L."/>
            <person name="Kremenetskaia I."/>
            <person name="Kurtz D.B."/>
            <person name="Kwan A."/>
            <person name="Lam B."/>
            <person name="Langin-Hooper S."/>
            <person name="Lee A."/>
            <person name="Lee J.M."/>
            <person name="Lenz C.A."/>
            <person name="Li J.H."/>
            <person name="Li Y.-P."/>
            <person name="Lin X."/>
            <person name="Liu S.X."/>
            <person name="Liu Z.A."/>
            <person name="Luros J.S."/>
            <person name="Maiti R."/>
            <person name="Marziali A."/>
            <person name="Militscher J."/>
            <person name="Miranda M."/>
            <person name="Nguyen M."/>
            <person name="Nierman W.C."/>
            <person name="Osborne B.I."/>
            <person name="Pai G."/>
            <person name="Peterson J."/>
            <person name="Pham P.K."/>
            <person name="Rizzo M."/>
            <person name="Rooney T."/>
            <person name="Rowley D."/>
            <person name="Sakano H."/>
            <person name="Salzberg S.L."/>
            <person name="Schwartz J.R."/>
            <person name="Shinn P."/>
            <person name="Southwick A.M."/>
            <person name="Sun H."/>
            <person name="Tallon L.J."/>
            <person name="Tambunga G."/>
            <person name="Toriumi M.J."/>
            <person name="Town C.D."/>
            <person name="Utterback T."/>
            <person name="Van Aken S."/>
            <person name="Vaysberg M."/>
            <person name="Vysotskaia V.S."/>
            <person name="Walker M."/>
            <person name="Wu D."/>
            <person name="Yu G."/>
            <person name="Fraser C.M."/>
            <person name="Venter J.C."/>
            <person name="Davis R.W."/>
        </authorList>
    </citation>
    <scope>NUCLEOTIDE SEQUENCE [LARGE SCALE GENOMIC DNA]</scope>
    <source>
        <strain>cv. Columbia</strain>
    </source>
</reference>
<reference key="2">
    <citation type="journal article" date="2017" name="Plant J.">
        <title>Araport11: a complete reannotation of the Arabidopsis thaliana reference genome.</title>
        <authorList>
            <person name="Cheng C.Y."/>
            <person name="Krishnakumar V."/>
            <person name="Chan A.P."/>
            <person name="Thibaud-Nissen F."/>
            <person name="Schobel S."/>
            <person name="Town C.D."/>
        </authorList>
    </citation>
    <scope>GENOME REANNOTATION</scope>
    <source>
        <strain>cv. Columbia</strain>
    </source>
</reference>
<reference key="3">
    <citation type="journal article" date="2004" name="Plant Cell">
        <title>Genome-wide analysis of Arabidopsis pentatricopeptide repeat proteins reveals their essential role in organelle biogenesis.</title>
        <authorList>
            <person name="Lurin C."/>
            <person name="Andres C."/>
            <person name="Aubourg S."/>
            <person name="Bellaoui M."/>
            <person name="Bitton F."/>
            <person name="Bruyere C."/>
            <person name="Caboche M."/>
            <person name="Debast C."/>
            <person name="Gualberto J."/>
            <person name="Hoffmann B."/>
            <person name="Lecharny A."/>
            <person name="Le Ret M."/>
            <person name="Martin-Magniette M.-L."/>
            <person name="Mireau H."/>
            <person name="Peeters N."/>
            <person name="Renou J.-P."/>
            <person name="Szurek B."/>
            <person name="Taconnat L."/>
            <person name="Small I."/>
        </authorList>
    </citation>
    <scope>GENE FAMILY</scope>
</reference>
<proteinExistence type="evidence at transcript level"/>
<protein>
    <recommendedName>
        <fullName>Pentatricopeptide repeat-containing protein At1g08610</fullName>
    </recommendedName>
</protein>
<feature type="chain" id="PRO_0000342763" description="Pentatricopeptide repeat-containing protein At1g08610">
    <location>
        <begin position="1"/>
        <end position="559"/>
    </location>
</feature>
<feature type="repeat" description="PPR 1">
    <location>
        <begin position="103"/>
        <end position="137"/>
    </location>
</feature>
<feature type="repeat" description="PPR 2">
    <location>
        <begin position="138"/>
        <end position="172"/>
    </location>
</feature>
<feature type="repeat" description="PPR 3">
    <location>
        <begin position="173"/>
        <end position="207"/>
    </location>
</feature>
<feature type="repeat" description="PPR 4">
    <location>
        <begin position="208"/>
        <end position="242"/>
    </location>
</feature>
<feature type="repeat" description="PPR 5">
    <location>
        <begin position="243"/>
        <end position="277"/>
    </location>
</feature>
<feature type="repeat" description="PPR 6">
    <location>
        <begin position="278"/>
        <end position="312"/>
    </location>
</feature>
<feature type="repeat" description="PPR 7">
    <location>
        <begin position="313"/>
        <end position="347"/>
    </location>
</feature>
<feature type="repeat" description="PPR 8">
    <location>
        <begin position="348"/>
        <end position="382"/>
    </location>
</feature>
<feature type="repeat" description="PPR 9">
    <location>
        <begin position="383"/>
        <end position="417"/>
    </location>
</feature>
<feature type="repeat" description="PPR 10">
    <location>
        <begin position="418"/>
        <end position="452"/>
    </location>
</feature>
<feature type="repeat" description="PPR 11">
    <location>
        <begin position="453"/>
        <end position="487"/>
    </location>
</feature>
<feature type="repeat" description="PPR 12">
    <location>
        <begin position="488"/>
        <end position="522"/>
    </location>
</feature>
<feature type="repeat" description="PPR 13">
    <location>
        <begin position="523"/>
        <end position="557"/>
    </location>
</feature>
<gene>
    <name type="ordered locus">At1g08610</name>
    <name type="ORF">F22O13.9</name>
</gene>